<proteinExistence type="evidence at protein level"/>
<gene>
    <name type="primary">CP</name>
</gene>
<evidence type="ECO:0000256" key="1">
    <source>
        <dbReference type="SAM" id="MobiDB-lite"/>
    </source>
</evidence>
<evidence type="ECO:0000269" key="2">
    <source>
    </source>
</evidence>
<evidence type="ECO:0000305" key="3"/>
<sequence length="204" mass="22331">MGDMYDESFDKSGGPADLMDDSWVESVSWKDLLKKLHSIKFALQSGRDEITGLLAALNRQCPYSPYEQFPDKKVYFLLDSRANSALGVIQNASAFKRRADEKNAVAGVTNIPANPNTTVTTNQGSTTTTKANTGSTLEEDLYTYYKFDDASTAFHKSLTSLENMELKSYYRRNFEKVFGIKFGGAAASSSAPPPASGGPIRPNP</sequence>
<comment type="function">
    <text>Capsid protein self-assembles to form rod-shaped virions about 22 nm in diameter with a central canal enclosing the viral genomic RNA.</text>
</comment>
<comment type="subunit">
    <text evidence="2">Interacts with the 40 kDa protein; this interaction may play a role in vector transmission of the virus.</text>
</comment>
<comment type="subcellular location">
    <subcellularLocation>
        <location evidence="3">Virion</location>
    </subcellularLocation>
</comment>
<comment type="similarity">
    <text evidence="3">Belongs to the virgaviridae capsid protein family.</text>
</comment>
<accession>Q88897</accession>
<feature type="chain" id="PRO_0000409295" description="Capsid protein">
    <location>
        <begin position="1"/>
        <end position="204"/>
    </location>
</feature>
<feature type="region of interest" description="Disordered" evidence="1">
    <location>
        <begin position="112"/>
        <end position="132"/>
    </location>
</feature>
<feature type="region of interest" description="Disordered" evidence="1">
    <location>
        <begin position="185"/>
        <end position="204"/>
    </location>
</feature>
<feature type="compositionally biased region" description="Low complexity" evidence="1">
    <location>
        <begin position="117"/>
        <end position="132"/>
    </location>
</feature>
<feature type="compositionally biased region" description="Pro residues" evidence="1">
    <location>
        <begin position="191"/>
        <end position="204"/>
    </location>
</feature>
<protein>
    <recommendedName>
        <fullName>Capsid protein</fullName>
    </recommendedName>
    <alternativeName>
        <fullName>Coat protein</fullName>
    </alternativeName>
    <alternativeName>
        <fullName>P23</fullName>
    </alternativeName>
</protein>
<reference key="1">
    <citation type="journal article" date="1995" name="J. Gen. Virol.">
        <title>Sequence of RNA 2 of a nematode-transmissible isolate of tobacco rattle virus.</title>
        <authorList>
            <person name="Hernandez C."/>
            <person name="Mathis A."/>
            <person name="Brown D.J."/>
            <person name="Bol J.F."/>
        </authorList>
    </citation>
    <scope>NUCLEOTIDE SEQUENCE [GENOMIC RNA]</scope>
</reference>
<reference key="2">
    <citation type="journal article" date="1999" name="J. Gen. Virol.">
        <title>Nonstructural proteins of Tobacco rattle virus which have a role in nematode-transmission: expression pattern and interaction with viral coat protein.</title>
        <authorList>
            <person name="Visser P.B."/>
            <person name="Bol J.F."/>
        </authorList>
    </citation>
    <scope>INTERACTION WITH 40 KDA PROTEIN</scope>
</reference>
<dbReference type="EMBL" id="Z36974">
    <property type="protein sequence ID" value="CAA85421.1"/>
    <property type="molecule type" value="Genomic_RNA"/>
</dbReference>
<dbReference type="RefSeq" id="NP_620682.1">
    <property type="nucleotide sequence ID" value="NC_003811.1"/>
</dbReference>
<dbReference type="SMR" id="Q88897"/>
<dbReference type="KEGG" id="vg:962133"/>
<dbReference type="Proteomes" id="UP000001669">
    <property type="component" value="Genome"/>
</dbReference>
<dbReference type="GO" id="GO:0019029">
    <property type="term" value="C:helical viral capsid"/>
    <property type="evidence" value="ECO:0007669"/>
    <property type="project" value="UniProtKB-KW"/>
</dbReference>
<dbReference type="GO" id="GO:0005198">
    <property type="term" value="F:structural molecule activity"/>
    <property type="evidence" value="ECO:0007669"/>
    <property type="project" value="InterPro"/>
</dbReference>
<dbReference type="Gene3D" id="1.20.120.70">
    <property type="entry name" value="Tobacco mosaic virus-like, coat protein"/>
    <property type="match status" value="1"/>
</dbReference>
<dbReference type="InterPro" id="IPR001337">
    <property type="entry name" value="TMV-like_coat"/>
</dbReference>
<dbReference type="InterPro" id="IPR036417">
    <property type="entry name" value="TMV-like_coat_sf"/>
</dbReference>
<dbReference type="Pfam" id="PF00721">
    <property type="entry name" value="TMV_coat"/>
    <property type="match status" value="1"/>
</dbReference>
<dbReference type="SUPFAM" id="SSF47195">
    <property type="entry name" value="TMV-like viral coat proteins"/>
    <property type="match status" value="1"/>
</dbReference>
<organismHost>
    <name type="scientific">Bidens pilosa</name>
    <name type="common">Hairy beggarticks</name>
    <name type="synonym">Cobbler's pegs</name>
    <dbReference type="NCBI Taxonomy" id="42337"/>
</organismHost>
<organismHost>
    <name type="scientific">Capsicum annuum</name>
    <name type="common">Capsicum pepper</name>
    <dbReference type="NCBI Taxonomy" id="4072"/>
</organismHost>
<organismHost>
    <name type="scientific">Cynara cardunculus var. scolymus</name>
    <name type="common">Globe artichoke</name>
    <name type="synonym">Cynara scolymus</name>
    <dbReference type="NCBI Taxonomy" id="59895"/>
</organismHost>
<organismHost>
    <name type="scientific">Solanum lycopersicum</name>
    <name type="common">Tomato</name>
    <name type="synonym">Lycopersicon esculentum</name>
    <dbReference type="NCBI Taxonomy" id="4081"/>
</organismHost>
<organism>
    <name type="scientific">Tobacco rattle virus (isolate PpK20)</name>
    <name type="common">TRV</name>
    <dbReference type="NCBI Taxonomy" id="652939"/>
    <lineage>
        <taxon>Viruses</taxon>
        <taxon>Riboviria</taxon>
        <taxon>Orthornavirae</taxon>
        <taxon>Kitrinoviricota</taxon>
        <taxon>Alsuviricetes</taxon>
        <taxon>Martellivirales</taxon>
        <taxon>Virgaviridae</taxon>
        <taxon>Tobravirus</taxon>
        <taxon>Tobacco rattle virus</taxon>
    </lineage>
</organism>
<keyword id="KW-0167">Capsid protein</keyword>
<keyword id="KW-1139">Helical capsid protein</keyword>
<keyword id="KW-1185">Reference proteome</keyword>
<keyword id="KW-0946">Virion</keyword>
<name>CAPSD_TRVPP</name>